<evidence type="ECO:0000255" key="1"/>
<evidence type="ECO:0000255" key="2">
    <source>
        <dbReference type="PROSITE-ProRule" id="PRU00159"/>
    </source>
</evidence>
<evidence type="ECO:0000255" key="3">
    <source>
        <dbReference type="PROSITE-ProRule" id="PRU10028"/>
    </source>
</evidence>
<evidence type="ECO:0000256" key="4">
    <source>
        <dbReference type="SAM" id="MobiDB-lite"/>
    </source>
</evidence>
<dbReference type="EC" id="2.7.10.1"/>
<dbReference type="EMBL" id="X72622">
    <property type="protein sequence ID" value="CAA51198.1"/>
    <property type="molecule type" value="mRNA"/>
</dbReference>
<dbReference type="PIR" id="S67815">
    <property type="entry name" value="S67815"/>
</dbReference>
<dbReference type="SMR" id="P42159"/>
<dbReference type="GlyCosmos" id="P42159">
    <property type="glycosylation" value="3 sites, No reported glycans"/>
</dbReference>
<dbReference type="BRENDA" id="2.7.10.1">
    <property type="organism ID" value="2415"/>
</dbReference>
<dbReference type="GO" id="GO:0005886">
    <property type="term" value="C:plasma membrane"/>
    <property type="evidence" value="ECO:0007669"/>
    <property type="project" value="UniProtKB-SubCell"/>
</dbReference>
<dbReference type="GO" id="GO:0043235">
    <property type="term" value="C:receptor complex"/>
    <property type="evidence" value="ECO:0007669"/>
    <property type="project" value="TreeGrafter"/>
</dbReference>
<dbReference type="GO" id="GO:0005524">
    <property type="term" value="F:ATP binding"/>
    <property type="evidence" value="ECO:0007669"/>
    <property type="project" value="UniProtKB-KW"/>
</dbReference>
<dbReference type="GO" id="GO:0005518">
    <property type="term" value="F:collagen binding"/>
    <property type="evidence" value="ECO:0007669"/>
    <property type="project" value="TreeGrafter"/>
</dbReference>
<dbReference type="GO" id="GO:0038062">
    <property type="term" value="F:protein tyrosine kinase collagen receptor activity"/>
    <property type="evidence" value="ECO:0007669"/>
    <property type="project" value="TreeGrafter"/>
</dbReference>
<dbReference type="GO" id="GO:0010976">
    <property type="term" value="P:positive regulation of neuron projection development"/>
    <property type="evidence" value="ECO:0007669"/>
    <property type="project" value="TreeGrafter"/>
</dbReference>
<dbReference type="GO" id="GO:0051897">
    <property type="term" value="P:positive regulation of phosphatidylinositol 3-kinase/protein kinase B signal transduction"/>
    <property type="evidence" value="ECO:0007669"/>
    <property type="project" value="TreeGrafter"/>
</dbReference>
<dbReference type="FunFam" id="1.10.510.10:FF:000667">
    <property type="entry name" value="Tyrosine-protein kinase receptor"/>
    <property type="match status" value="1"/>
</dbReference>
<dbReference type="Gene3D" id="2.60.40.10">
    <property type="entry name" value="Immunoglobulins"/>
    <property type="match status" value="1"/>
</dbReference>
<dbReference type="Gene3D" id="3.30.200.20">
    <property type="entry name" value="Phosphorylase Kinase, domain 1"/>
    <property type="match status" value="1"/>
</dbReference>
<dbReference type="Gene3D" id="1.10.510.10">
    <property type="entry name" value="Transferase(Phosphotransferase) domain 1"/>
    <property type="match status" value="1"/>
</dbReference>
<dbReference type="InterPro" id="IPR007110">
    <property type="entry name" value="Ig-like_dom"/>
</dbReference>
<dbReference type="InterPro" id="IPR036179">
    <property type="entry name" value="Ig-like_dom_sf"/>
</dbReference>
<dbReference type="InterPro" id="IPR013783">
    <property type="entry name" value="Ig-like_fold"/>
</dbReference>
<dbReference type="InterPro" id="IPR011009">
    <property type="entry name" value="Kinase-like_dom_sf"/>
</dbReference>
<dbReference type="InterPro" id="IPR000719">
    <property type="entry name" value="Prot_kinase_dom"/>
</dbReference>
<dbReference type="InterPro" id="IPR050122">
    <property type="entry name" value="RTK"/>
</dbReference>
<dbReference type="InterPro" id="IPR001245">
    <property type="entry name" value="Ser-Thr/Tyr_kinase_cat_dom"/>
</dbReference>
<dbReference type="InterPro" id="IPR008266">
    <property type="entry name" value="Tyr_kinase_AS"/>
</dbReference>
<dbReference type="InterPro" id="IPR020635">
    <property type="entry name" value="Tyr_kinase_cat_dom"/>
</dbReference>
<dbReference type="InterPro" id="IPR002011">
    <property type="entry name" value="Tyr_kinase_rcpt_2_CS"/>
</dbReference>
<dbReference type="PANTHER" id="PTHR24416:SF634">
    <property type="entry name" value="DISCOIDIN DOMAIN-CONTAINING RECEPTOR TYROSINE KINASE B"/>
    <property type="match status" value="1"/>
</dbReference>
<dbReference type="PANTHER" id="PTHR24416">
    <property type="entry name" value="TYROSINE-PROTEIN KINASE RECEPTOR"/>
    <property type="match status" value="1"/>
</dbReference>
<dbReference type="Pfam" id="PF07714">
    <property type="entry name" value="PK_Tyr_Ser-Thr"/>
    <property type="match status" value="1"/>
</dbReference>
<dbReference type="PIRSF" id="PIRSF000615">
    <property type="entry name" value="TyrPK_CSF1-R"/>
    <property type="match status" value="1"/>
</dbReference>
<dbReference type="PRINTS" id="PR00109">
    <property type="entry name" value="TYRKINASE"/>
</dbReference>
<dbReference type="SMART" id="SM00219">
    <property type="entry name" value="TyrKc"/>
    <property type="match status" value="1"/>
</dbReference>
<dbReference type="SUPFAM" id="SSF48726">
    <property type="entry name" value="Immunoglobulin"/>
    <property type="match status" value="1"/>
</dbReference>
<dbReference type="SUPFAM" id="SSF56112">
    <property type="entry name" value="Protein kinase-like (PK-like)"/>
    <property type="match status" value="1"/>
</dbReference>
<dbReference type="PROSITE" id="PS50835">
    <property type="entry name" value="IG_LIKE"/>
    <property type="match status" value="1"/>
</dbReference>
<dbReference type="PROSITE" id="PS50011">
    <property type="entry name" value="PROTEIN_KINASE_DOM"/>
    <property type="match status" value="1"/>
</dbReference>
<dbReference type="PROSITE" id="PS00109">
    <property type="entry name" value="PROTEIN_KINASE_TYR"/>
    <property type="match status" value="1"/>
</dbReference>
<dbReference type="PROSITE" id="PS00239">
    <property type="entry name" value="RECEPTOR_TYR_KIN_II"/>
    <property type="match status" value="1"/>
</dbReference>
<feature type="chain" id="PRO_0000058930" description="Class II receptor tyrosine kinase">
    <location>
        <begin position="1"/>
        <end position="605"/>
    </location>
</feature>
<feature type="topological domain" description="Extracellular" evidence="1">
    <location>
        <begin position="1"/>
        <end position="84"/>
    </location>
</feature>
<feature type="transmembrane region" description="Helical" evidence="1">
    <location>
        <begin position="85"/>
        <end position="105"/>
    </location>
</feature>
<feature type="topological domain" description="Cytoplasmic" evidence="1">
    <location>
        <begin position="106"/>
        <end position="605"/>
    </location>
</feature>
<feature type="domain" description="Ig-like C2-type">
    <location>
        <begin position="1"/>
        <end position="67"/>
    </location>
</feature>
<feature type="domain" description="Protein kinase" evidence="2">
    <location>
        <begin position="346"/>
        <end position="605"/>
    </location>
</feature>
<feature type="region of interest" description="Disordered" evidence="4">
    <location>
        <begin position="209"/>
        <end position="230"/>
    </location>
</feature>
<feature type="compositionally biased region" description="Polar residues" evidence="4">
    <location>
        <begin position="221"/>
        <end position="230"/>
    </location>
</feature>
<feature type="active site" description="Proton acceptor" evidence="2 3">
    <location>
        <position position="496"/>
    </location>
</feature>
<feature type="binding site" evidence="2">
    <location>
        <begin position="352"/>
        <end position="360"/>
    </location>
    <ligand>
        <name>ATP</name>
        <dbReference type="ChEBI" id="CHEBI:30616"/>
    </ligand>
</feature>
<feature type="binding site" evidence="2">
    <location>
        <position position="393"/>
    </location>
    <ligand>
        <name>ATP</name>
        <dbReference type="ChEBI" id="CHEBI:30616"/>
    </ligand>
</feature>
<feature type="modified residue" description="Phosphotyrosine; by autocatalysis" evidence="1">
    <location>
        <position position="527"/>
    </location>
</feature>
<feature type="glycosylation site" description="N-linked (GlcNAc...) asparagine" evidence="1">
    <location>
        <position position="26"/>
    </location>
</feature>
<feature type="glycosylation site" description="N-linked (GlcNAc...) asparagine" evidence="1">
    <location>
        <position position="44"/>
    </location>
</feature>
<feature type="glycosylation site" description="N-linked (GlcNAc...) asparagine" evidence="1">
    <location>
        <position position="72"/>
    </location>
</feature>
<keyword id="KW-0067">ATP-binding</keyword>
<keyword id="KW-1003">Cell membrane</keyword>
<keyword id="KW-0325">Glycoprotein</keyword>
<keyword id="KW-0393">Immunoglobulin domain</keyword>
<keyword id="KW-0418">Kinase</keyword>
<keyword id="KW-0472">Membrane</keyword>
<keyword id="KW-0547">Nucleotide-binding</keyword>
<keyword id="KW-0597">Phosphoprotein</keyword>
<keyword id="KW-0675">Receptor</keyword>
<keyword id="KW-0808">Transferase</keyword>
<keyword id="KW-0812">Transmembrane</keyword>
<keyword id="KW-1133">Transmembrane helix</keyword>
<keyword id="KW-0829">Tyrosine-protein kinase</keyword>
<organism>
    <name type="scientific">Geodia cydonium</name>
    <name type="common">Sponge</name>
    <dbReference type="NCBI Taxonomy" id="6047"/>
    <lineage>
        <taxon>Eukaryota</taxon>
        <taxon>Metazoa</taxon>
        <taxon>Porifera</taxon>
        <taxon>Demospongiae</taxon>
        <taxon>Heteroscleromorpha</taxon>
        <taxon>Tetractinellida</taxon>
        <taxon>Astrophorina</taxon>
        <taxon>Geodiidae</taxon>
        <taxon>Geodia</taxon>
    </lineage>
</organism>
<proteinExistence type="evidence at transcript level"/>
<protein>
    <recommendedName>
        <fullName>Class II receptor tyrosine kinase</fullName>
        <ecNumber>2.7.10.1</ecNumber>
    </recommendedName>
    <alternativeName>
        <fullName>GCTK</fullName>
    </alternativeName>
</protein>
<name>RTK2_GEOCY</name>
<accession>P42159</accession>
<gene>
    <name type="primary">TK</name>
</gene>
<reference key="1">
    <citation type="journal article" date="1994" name="Mol. Membr. Biol.">
        <title>Molecular cloning of a tyrosine kinase gene from the marine sponge Geodia cydonium: a new member belonging to the receptor tyrosine kinase class II family.</title>
        <authorList>
            <person name="Schaecke H."/>
            <person name="Schroeder H.C."/>
            <person name="Gamulin V."/>
            <person name="Rinkevich B."/>
            <person name="Mueller I.M."/>
            <person name="Mueller W.E.G."/>
        </authorList>
    </citation>
    <scope>NUCLEOTIDE SEQUENCE [MRNA]</scope>
</reference>
<reference key="2">
    <citation type="submission" date="1995-12" db="EMBL/GenBank/DDBJ databases">
        <authorList>
            <person name="Mueller W.E.G."/>
        </authorList>
    </citation>
    <scope>SEQUENCE REVISION</scope>
</reference>
<comment type="catalytic activity">
    <reaction evidence="3">
        <text>L-tyrosyl-[protein] + ATP = O-phospho-L-tyrosyl-[protein] + ADP + H(+)</text>
        <dbReference type="Rhea" id="RHEA:10596"/>
        <dbReference type="Rhea" id="RHEA-COMP:10136"/>
        <dbReference type="Rhea" id="RHEA-COMP:20101"/>
        <dbReference type="ChEBI" id="CHEBI:15378"/>
        <dbReference type="ChEBI" id="CHEBI:30616"/>
        <dbReference type="ChEBI" id="CHEBI:46858"/>
        <dbReference type="ChEBI" id="CHEBI:61978"/>
        <dbReference type="ChEBI" id="CHEBI:456216"/>
        <dbReference type="EC" id="2.7.10.1"/>
    </reaction>
</comment>
<comment type="subcellular location">
    <subcellularLocation>
        <location>Cell membrane</location>
        <topology>Single-pass membrane protein</topology>
    </subcellularLocation>
</comment>
<comment type="PTM">
    <text>Phosphorylated.</text>
</comment>
<comment type="similarity">
    <text evidence="2">Belongs to the protein kinase superfamily. Tyr protein kinase family. Insulin receptor subfamily.</text>
</comment>
<sequence length="605" mass="67773">MWSSPGRNLESGRFNITPRYTGTLSNGSVSSSDKVALSQLTIFNVTVADEGEYTCSVDGESASFRVDLGDSNSSGSNSGVIAGVLITLLLLIALIIILICVFWVVWRYRRRGKFDLGSCRELSCSSCSCVPLLAALKGVKLPTRHRENLNKNGTRLRLNERNHIADTNTEIYSVVQKPLKKISKSPPPLPPLTLTETELNELMSIDEKEELSPIQEKPTRRNTGLSTYSQSGTIPKLAKLTKLRKFKMKENPIYQSADELELELELQVDNTLYALPSKPNSTRNSASFTDDLASDPIYSVAINPSMFTKRSSTIGNDDDLHPYGPIYARPIKQKMRQPLNVSVDNIREVKQIGVGQFGAVVLAEMTGLSGSERCVPTKRDPSMLNGVALVAVKKLKPDVSEEVRQSFDKEIKFVSQLQHDSIVQLLAVCTHSKHPFIVMEYMENGDLNQFLQKYQMVDDDSALYSNQIPPSTLLYMAVQIASGMVYLSSLNYVHRDLATRNCLVGSNFRIKISDFGMSRNLYERVYYRVRGRAMLPIRWMATESFYGRFSEKSDAWAYGVTVWEIYTLGKKQPYEELDDQDMIQDAIRGTGRRIMGRPRGVAGCV</sequence>